<proteinExistence type="evidence at transcript level"/>
<keyword id="KW-0333">Golgi apparatus</keyword>
<keyword id="KW-0472">Membrane</keyword>
<keyword id="KW-0496">Mitochondrion</keyword>
<keyword id="KW-1185">Reference proteome</keyword>
<keyword id="KW-0812">Transmembrane</keyword>
<keyword id="KW-1133">Transmembrane helix</keyword>
<feature type="chain" id="PRO_0000089258" description="Protein C1orf43 homolog">
    <location>
        <begin position="1"/>
        <end position="189"/>
    </location>
</feature>
<feature type="transmembrane region" description="Helical" evidence="2">
    <location>
        <begin position="11"/>
        <end position="31"/>
    </location>
</feature>
<evidence type="ECO:0000250" key="1">
    <source>
        <dbReference type="UniProtKB" id="Q9BWL3"/>
    </source>
</evidence>
<evidence type="ECO:0000255" key="2"/>
<evidence type="ECO:0000305" key="3"/>
<reference key="1">
    <citation type="submission" date="2004-11" db="EMBL/GenBank/DDBJ databases">
        <authorList>
            <consortium name="The German cDNA consortium"/>
        </authorList>
    </citation>
    <scope>NUCLEOTIDE SEQUENCE [LARGE SCALE MRNA]</scope>
    <source>
        <tissue>Kidney</tissue>
    </source>
</reference>
<accession>Q5RF08</accession>
<comment type="function">
    <text evidence="1">General regulator of phagocytosis. Required to uptake Gram negative bacterium by macrophages.</text>
</comment>
<comment type="subcellular location">
    <subcellularLocation>
        <location evidence="3">Membrane</location>
        <topology evidence="3">Single-pass membrane protein</topology>
    </subcellularLocation>
    <subcellularLocation>
        <location evidence="1">Golgi apparatus</location>
    </subcellularLocation>
    <subcellularLocation>
        <location evidence="1">Mitochondrion</location>
    </subcellularLocation>
</comment>
<comment type="domain">
    <text evidence="1">N-terminal region is required for phagocytosis of Gram negative bacterium.</text>
</comment>
<sequence length="189" mass="21582">MASGSNWLSGVNVVLVMAYGSLVFVLLFIFVKRQIMRFAMKSRRGPHVPVGHNAPKDLKEEIDIRLSRVQDIKYEPQLLADDDARLLQLETQGNQSCYNYLYRMKALDAIRTSEIPFHSEGRHPRSLMGKNFRSYLLDLRNTSTPFKGVRKALIDTLLDGYETARYGTGVFGQNEYLRYQEALSELATA</sequence>
<organism>
    <name type="scientific">Pongo abelii</name>
    <name type="common">Sumatran orangutan</name>
    <name type="synonym">Pongo pygmaeus abelii</name>
    <dbReference type="NCBI Taxonomy" id="9601"/>
    <lineage>
        <taxon>Eukaryota</taxon>
        <taxon>Metazoa</taxon>
        <taxon>Chordata</taxon>
        <taxon>Craniata</taxon>
        <taxon>Vertebrata</taxon>
        <taxon>Euteleostomi</taxon>
        <taxon>Mammalia</taxon>
        <taxon>Eutheria</taxon>
        <taxon>Euarchontoglires</taxon>
        <taxon>Primates</taxon>
        <taxon>Haplorrhini</taxon>
        <taxon>Catarrhini</taxon>
        <taxon>Hominidae</taxon>
        <taxon>Pongo</taxon>
    </lineage>
</organism>
<name>CA043_PONAB</name>
<dbReference type="EMBL" id="CR857353">
    <property type="protein sequence ID" value="CAH89649.1"/>
    <property type="molecule type" value="mRNA"/>
</dbReference>
<dbReference type="RefSeq" id="NP_001124740.1">
    <property type="nucleotide sequence ID" value="NM_001131268.2"/>
</dbReference>
<dbReference type="SMR" id="Q5RF08"/>
<dbReference type="STRING" id="9601.ENSPPYP00000000916"/>
<dbReference type="GeneID" id="100171589"/>
<dbReference type="KEGG" id="pon:100171589"/>
<dbReference type="CTD" id="101111141"/>
<dbReference type="eggNOG" id="ENOG502QUKH">
    <property type="taxonomic scope" value="Eukaryota"/>
</dbReference>
<dbReference type="HOGENOM" id="CLU_068266_0_0_1"/>
<dbReference type="InParanoid" id="Q5RF08"/>
<dbReference type="OrthoDB" id="5960253at2759"/>
<dbReference type="Proteomes" id="UP000001595">
    <property type="component" value="Unplaced"/>
</dbReference>
<dbReference type="GO" id="GO:0005794">
    <property type="term" value="C:Golgi apparatus"/>
    <property type="evidence" value="ECO:0000250"/>
    <property type="project" value="UniProtKB"/>
</dbReference>
<dbReference type="GO" id="GO:0016020">
    <property type="term" value="C:membrane"/>
    <property type="evidence" value="ECO:0007669"/>
    <property type="project" value="UniProtKB-SubCell"/>
</dbReference>
<dbReference type="GO" id="GO:0005739">
    <property type="term" value="C:mitochondrion"/>
    <property type="evidence" value="ECO:0000250"/>
    <property type="project" value="UniProtKB"/>
</dbReference>
<dbReference type="GO" id="GO:0006909">
    <property type="term" value="P:phagocytosis"/>
    <property type="evidence" value="ECO:0000250"/>
    <property type="project" value="UniProtKB"/>
</dbReference>
<dbReference type="InterPro" id="IPR010876">
    <property type="entry name" value="C1orf43"/>
</dbReference>
<dbReference type="PANTHER" id="PTHR21425">
    <property type="entry name" value="NICE-3"/>
    <property type="match status" value="1"/>
</dbReference>
<dbReference type="PANTHER" id="PTHR21425:SF2">
    <property type="entry name" value="PROTEIN C1ORF43"/>
    <property type="match status" value="1"/>
</dbReference>
<dbReference type="Pfam" id="PF07406">
    <property type="entry name" value="NICE-3"/>
    <property type="match status" value="1"/>
</dbReference>
<protein>
    <recommendedName>
        <fullName>Protein C1orf43 homolog</fullName>
    </recommendedName>
</protein>